<name>MREC_LISMO</name>
<reference evidence="6" key="1">
    <citation type="journal article" date="2001" name="Science">
        <title>Comparative genomics of Listeria species.</title>
        <authorList>
            <person name="Glaser P."/>
            <person name="Frangeul L."/>
            <person name="Buchrieser C."/>
            <person name="Rusniok C."/>
            <person name="Amend A."/>
            <person name="Baquero F."/>
            <person name="Berche P."/>
            <person name="Bloecker H."/>
            <person name="Brandt P."/>
            <person name="Chakraborty T."/>
            <person name="Charbit A."/>
            <person name="Chetouani F."/>
            <person name="Couve E."/>
            <person name="de Daruvar A."/>
            <person name="Dehoux P."/>
            <person name="Domann E."/>
            <person name="Dominguez-Bernal G."/>
            <person name="Duchaud E."/>
            <person name="Durant L."/>
            <person name="Dussurget O."/>
            <person name="Entian K.-D."/>
            <person name="Fsihi H."/>
            <person name="Garcia-del Portillo F."/>
            <person name="Garrido P."/>
            <person name="Gautier L."/>
            <person name="Goebel W."/>
            <person name="Gomez-Lopez N."/>
            <person name="Hain T."/>
            <person name="Hauf J."/>
            <person name="Jackson D."/>
            <person name="Jones L.-M."/>
            <person name="Kaerst U."/>
            <person name="Kreft J."/>
            <person name="Kuhn M."/>
            <person name="Kunst F."/>
            <person name="Kurapkat G."/>
            <person name="Madueno E."/>
            <person name="Maitournam A."/>
            <person name="Mata Vicente J."/>
            <person name="Ng E."/>
            <person name="Nedjari H."/>
            <person name="Nordsiek G."/>
            <person name="Novella S."/>
            <person name="de Pablos B."/>
            <person name="Perez-Diaz J.-C."/>
            <person name="Purcell R."/>
            <person name="Remmel B."/>
            <person name="Rose M."/>
            <person name="Schlueter T."/>
            <person name="Simoes N."/>
            <person name="Tierrez A."/>
            <person name="Vazquez-Boland J.-A."/>
            <person name="Voss H."/>
            <person name="Wehland J."/>
            <person name="Cossart P."/>
        </authorList>
    </citation>
    <scope>NUCLEOTIDE SEQUENCE [LARGE SCALE GENOMIC DNA]</scope>
    <source>
        <strain>ATCC BAA-679 / EGD-e</strain>
    </source>
</reference>
<reference evidence="7" key="2">
    <citation type="journal article" date="2006" name="Mol. Microbiol.">
        <title>Dimeric structure of the cell shape protein MreC and its functional implications.</title>
        <authorList>
            <person name="van den Ent F."/>
            <person name="Leaver M."/>
            <person name="Bendezu F."/>
            <person name="Errington J."/>
            <person name="de Boer P."/>
            <person name="Lowe J."/>
        </authorList>
    </citation>
    <scope>X-RAY CRYSTALLOGRAPHY (2.50 ANGSTROMS) OF 50-295</scope>
    <scope>SUBUNIT</scope>
    <source>
        <strain evidence="4">ATCC BAA-679 / EGD-e</strain>
    </source>
</reference>
<keyword id="KW-0002">3D-structure</keyword>
<keyword id="KW-0133">Cell shape</keyword>
<keyword id="KW-0175">Coiled coil</keyword>
<keyword id="KW-1185">Reference proteome</keyword>
<keyword id="KW-0732">Signal</keyword>
<gene>
    <name evidence="6" type="primary">mreC</name>
    <name type="ordered locus">lmo1547</name>
</gene>
<proteinExistence type="evidence at protein level"/>
<sequence>MPQFFLNKRLIILLISIIVLVALVGFSLRDRENASWPEQFVKDVVGFGENIVAKPTSFISGAVDGVVDLKNTYTENQHLKERLEELAQLESEVADLKKENKDLKESLDITDSIRDYDPLNASVISRNPTNWNDQVEIDKGSSDGVKPDMAVTTPSGLIGKVTTTGAKSATVELLTSSDVKNRVSAKVQGKENAFGIINGYDSDTKLLELKQLPYDMKFKKGQKVVTSGLGGKFPAGIFIGTIEKVETDKMGLSQTAFIKPGADMYDLNHVTVLKRSAEAGTTDDDTTSSDTTGGQ</sequence>
<dbReference type="EMBL" id="AL591979">
    <property type="protein sequence ID" value="CAC99625.1"/>
    <property type="molecule type" value="Genomic_DNA"/>
</dbReference>
<dbReference type="PIR" id="AC1268">
    <property type="entry name" value="AC1268"/>
</dbReference>
<dbReference type="RefSeq" id="NP_465072.1">
    <property type="nucleotide sequence ID" value="NC_003210.1"/>
</dbReference>
<dbReference type="RefSeq" id="WP_003725674.1">
    <property type="nucleotide sequence ID" value="NZ_CP149495.1"/>
</dbReference>
<dbReference type="PDB" id="2J5U">
    <property type="method" value="X-ray"/>
    <property type="resolution" value="2.50 A"/>
    <property type="chains" value="A/B=50-295"/>
</dbReference>
<dbReference type="PDBsum" id="2J5U"/>
<dbReference type="SMR" id="Q8Y6Y4"/>
<dbReference type="STRING" id="169963.gene:17594204"/>
<dbReference type="PaxDb" id="169963-lmo1547"/>
<dbReference type="EnsemblBacteria" id="CAC99625">
    <property type="protein sequence ID" value="CAC99625"/>
    <property type="gene ID" value="CAC99625"/>
</dbReference>
<dbReference type="GeneID" id="986941"/>
<dbReference type="KEGG" id="lmo:lmo1547"/>
<dbReference type="PATRIC" id="fig|169963.11.peg.1588"/>
<dbReference type="eggNOG" id="COG1792">
    <property type="taxonomic scope" value="Bacteria"/>
</dbReference>
<dbReference type="HOGENOM" id="CLU_042663_1_1_9"/>
<dbReference type="OrthoDB" id="9792313at2"/>
<dbReference type="PhylomeDB" id="Q8Y6Y4"/>
<dbReference type="BioCyc" id="LMON169963:LMO1547-MONOMER"/>
<dbReference type="EvolutionaryTrace" id="Q8Y6Y4"/>
<dbReference type="Proteomes" id="UP000000817">
    <property type="component" value="Chromosome"/>
</dbReference>
<dbReference type="GO" id="GO:0005886">
    <property type="term" value="C:plasma membrane"/>
    <property type="evidence" value="ECO:0000318"/>
    <property type="project" value="GO_Central"/>
</dbReference>
<dbReference type="GO" id="GO:0008360">
    <property type="term" value="P:regulation of cell shape"/>
    <property type="evidence" value="ECO:0000250"/>
    <property type="project" value="UniProtKB"/>
</dbReference>
<dbReference type="Gene3D" id="2.40.10.340">
    <property type="entry name" value="Rod shape-determining protein MreC, domain 1"/>
    <property type="match status" value="1"/>
</dbReference>
<dbReference type="Gene3D" id="2.40.10.350">
    <property type="entry name" value="Rod shape-determining protein MreC, domain 2"/>
    <property type="match status" value="1"/>
</dbReference>
<dbReference type="Gene3D" id="1.20.5.490">
    <property type="entry name" value="Single helix bin"/>
    <property type="match status" value="1"/>
</dbReference>
<dbReference type="InterPro" id="IPR042177">
    <property type="entry name" value="Cell/Rod_1"/>
</dbReference>
<dbReference type="InterPro" id="IPR042175">
    <property type="entry name" value="Cell/Rod_MreC_2"/>
</dbReference>
<dbReference type="InterPro" id="IPR007221">
    <property type="entry name" value="MreC"/>
</dbReference>
<dbReference type="InterPro" id="IPR055342">
    <property type="entry name" value="MreC_beta-barrel_core"/>
</dbReference>
<dbReference type="NCBIfam" id="TIGR00219">
    <property type="entry name" value="mreC"/>
    <property type="match status" value="1"/>
</dbReference>
<dbReference type="PANTHER" id="PTHR34138">
    <property type="entry name" value="CELL SHAPE-DETERMINING PROTEIN MREC"/>
    <property type="match status" value="1"/>
</dbReference>
<dbReference type="PANTHER" id="PTHR34138:SF1">
    <property type="entry name" value="CELL SHAPE-DETERMINING PROTEIN MREC"/>
    <property type="match status" value="1"/>
</dbReference>
<dbReference type="Pfam" id="PF04085">
    <property type="entry name" value="MreC"/>
    <property type="match status" value="1"/>
</dbReference>
<dbReference type="PIRSF" id="PIRSF038471">
    <property type="entry name" value="MreC"/>
    <property type="match status" value="1"/>
</dbReference>
<accession>Q8Y6Y4</accession>
<evidence type="ECO:0000250" key="1">
    <source>
        <dbReference type="UniProtKB" id="Q01466"/>
    </source>
</evidence>
<evidence type="ECO:0000255" key="2"/>
<evidence type="ECO:0000256" key="3">
    <source>
        <dbReference type="SAM" id="MobiDB-lite"/>
    </source>
</evidence>
<evidence type="ECO:0000269" key="4">
    <source>
    </source>
</evidence>
<evidence type="ECO:0000305" key="5"/>
<evidence type="ECO:0000312" key="6">
    <source>
        <dbReference type="EMBL" id="CAC99625.1"/>
    </source>
</evidence>
<evidence type="ECO:0000312" key="7">
    <source>
        <dbReference type="PDB" id="2J5U"/>
    </source>
</evidence>
<evidence type="ECO:0007829" key="8">
    <source>
        <dbReference type="PDB" id="2J5U"/>
    </source>
</evidence>
<organism>
    <name type="scientific">Listeria monocytogenes serovar 1/2a (strain ATCC BAA-679 / EGD-e)</name>
    <dbReference type="NCBI Taxonomy" id="169963"/>
    <lineage>
        <taxon>Bacteria</taxon>
        <taxon>Bacillati</taxon>
        <taxon>Bacillota</taxon>
        <taxon>Bacilli</taxon>
        <taxon>Bacillales</taxon>
        <taxon>Listeriaceae</taxon>
        <taxon>Listeria</taxon>
    </lineage>
</organism>
<feature type="signal peptide" evidence="2">
    <location>
        <begin position="1"/>
        <end position="34"/>
    </location>
</feature>
<feature type="chain" id="PRO_0000418058" description="Cell shape-determining protein MreC" evidence="2">
    <location>
        <begin position="35"/>
        <end position="295"/>
    </location>
</feature>
<feature type="region of interest" description="Disordered" evidence="3">
    <location>
        <begin position="276"/>
        <end position="295"/>
    </location>
</feature>
<feature type="coiled-coil region" evidence="2">
    <location>
        <begin position="66"/>
        <end position="112"/>
    </location>
</feature>
<feature type="turn" evidence="8">
    <location>
        <begin position="75"/>
        <end position="77"/>
    </location>
</feature>
<feature type="helix" evidence="8">
    <location>
        <begin position="79"/>
        <end position="106"/>
    </location>
</feature>
<feature type="strand" evidence="8">
    <location>
        <begin position="116"/>
        <end position="125"/>
    </location>
</feature>
<feature type="helix" evidence="8">
    <location>
        <begin position="128"/>
        <end position="130"/>
    </location>
</feature>
<feature type="turn" evidence="8">
    <location>
        <begin position="131"/>
        <end position="133"/>
    </location>
</feature>
<feature type="strand" evidence="8">
    <location>
        <begin position="134"/>
        <end position="138"/>
    </location>
</feature>
<feature type="helix" evidence="8">
    <location>
        <begin position="141"/>
        <end position="143"/>
    </location>
</feature>
<feature type="strand" evidence="8">
    <location>
        <begin position="150"/>
        <end position="153"/>
    </location>
</feature>
<feature type="strand" evidence="8">
    <location>
        <begin position="156"/>
        <end position="164"/>
    </location>
</feature>
<feature type="strand" evidence="8">
    <location>
        <begin position="169"/>
        <end position="173"/>
    </location>
</feature>
<feature type="strand" evidence="8">
    <location>
        <begin position="183"/>
        <end position="187"/>
    </location>
</feature>
<feature type="strand" evidence="8">
    <location>
        <begin position="189"/>
        <end position="191"/>
    </location>
</feature>
<feature type="strand" evidence="8">
    <location>
        <begin position="193"/>
        <end position="201"/>
    </location>
</feature>
<feature type="turn" evidence="8">
    <location>
        <begin position="202"/>
        <end position="205"/>
    </location>
</feature>
<feature type="strand" evidence="8">
    <location>
        <begin position="206"/>
        <end position="213"/>
    </location>
</feature>
<feature type="strand" evidence="8">
    <location>
        <begin position="223"/>
        <end position="226"/>
    </location>
</feature>
<feature type="strand" evidence="8">
    <location>
        <begin position="231"/>
        <end position="233"/>
    </location>
</feature>
<feature type="strand" evidence="8">
    <location>
        <begin position="238"/>
        <end position="247"/>
    </location>
</feature>
<feature type="strand" evidence="8">
    <location>
        <begin position="251"/>
        <end position="262"/>
    </location>
</feature>
<feature type="strand" evidence="8">
    <location>
        <begin position="269"/>
        <end position="275"/>
    </location>
</feature>
<protein>
    <recommendedName>
        <fullName evidence="1">Cell shape-determining protein MreC</fullName>
    </recommendedName>
    <alternativeName>
        <fullName evidence="1">Cell shape protein MreC</fullName>
    </alternativeName>
    <alternativeName>
        <fullName evidence="1">Rod shape-determining protein MreC</fullName>
    </alternativeName>
</protein>
<comment type="function">
    <text evidence="1">Involved in formation and maintenance of cell shape.</text>
</comment>
<comment type="subunit">
    <text evidence="4">Homooligomer of 24 subunits, arranged as 12 dimers.</text>
</comment>
<comment type="similarity">
    <text evidence="5">Belongs to the MreC family.</text>
</comment>